<name>SYR_LACPL</name>
<comment type="catalytic activity">
    <reaction evidence="1">
        <text>tRNA(Arg) + L-arginine + ATP = L-arginyl-tRNA(Arg) + AMP + diphosphate</text>
        <dbReference type="Rhea" id="RHEA:20301"/>
        <dbReference type="Rhea" id="RHEA-COMP:9658"/>
        <dbReference type="Rhea" id="RHEA-COMP:9673"/>
        <dbReference type="ChEBI" id="CHEBI:30616"/>
        <dbReference type="ChEBI" id="CHEBI:32682"/>
        <dbReference type="ChEBI" id="CHEBI:33019"/>
        <dbReference type="ChEBI" id="CHEBI:78442"/>
        <dbReference type="ChEBI" id="CHEBI:78513"/>
        <dbReference type="ChEBI" id="CHEBI:456215"/>
        <dbReference type="EC" id="6.1.1.19"/>
    </reaction>
</comment>
<comment type="subunit">
    <text evidence="1">Monomer.</text>
</comment>
<comment type="subcellular location">
    <subcellularLocation>
        <location evidence="1">Cytoplasm</location>
    </subcellularLocation>
</comment>
<comment type="similarity">
    <text evidence="1">Belongs to the class-I aminoacyl-tRNA synthetase family.</text>
</comment>
<keyword id="KW-0030">Aminoacyl-tRNA synthetase</keyword>
<keyword id="KW-0067">ATP-binding</keyword>
<keyword id="KW-0963">Cytoplasm</keyword>
<keyword id="KW-0436">Ligase</keyword>
<keyword id="KW-0547">Nucleotide-binding</keyword>
<keyword id="KW-0648">Protein biosynthesis</keyword>
<keyword id="KW-1185">Reference proteome</keyword>
<accession>Q88X53</accession>
<accession>F9UNE5</accession>
<feature type="chain" id="PRO_0000151568" description="Arginine--tRNA ligase">
    <location>
        <begin position="1"/>
        <end position="562"/>
    </location>
</feature>
<feature type="short sequence motif" description="'HIGH' region">
    <location>
        <begin position="121"/>
        <end position="131"/>
    </location>
</feature>
<gene>
    <name evidence="1" type="primary">argS</name>
    <name type="ordered locus">lp_1391</name>
</gene>
<reference key="1">
    <citation type="journal article" date="2003" name="Proc. Natl. Acad. Sci. U.S.A.">
        <title>Complete genome sequence of Lactobacillus plantarum WCFS1.</title>
        <authorList>
            <person name="Kleerebezem M."/>
            <person name="Boekhorst J."/>
            <person name="van Kranenburg R."/>
            <person name="Molenaar D."/>
            <person name="Kuipers O.P."/>
            <person name="Leer R."/>
            <person name="Tarchini R."/>
            <person name="Peters S.A."/>
            <person name="Sandbrink H.M."/>
            <person name="Fiers M.W.E.J."/>
            <person name="Stiekema W."/>
            <person name="Klein Lankhorst R.M."/>
            <person name="Bron P.A."/>
            <person name="Hoffer S.M."/>
            <person name="Nierop Groot M.N."/>
            <person name="Kerkhoven R."/>
            <person name="De Vries M."/>
            <person name="Ursing B."/>
            <person name="De Vos W.M."/>
            <person name="Siezen R.J."/>
        </authorList>
    </citation>
    <scope>NUCLEOTIDE SEQUENCE [LARGE SCALE GENOMIC DNA]</scope>
    <source>
        <strain>ATCC BAA-793 / NCIMB 8826 / WCFS1</strain>
    </source>
</reference>
<reference key="2">
    <citation type="journal article" date="2012" name="J. Bacteriol.">
        <title>Complete resequencing and reannotation of the Lactobacillus plantarum WCFS1 genome.</title>
        <authorList>
            <person name="Siezen R.J."/>
            <person name="Francke C."/>
            <person name="Renckens B."/>
            <person name="Boekhorst J."/>
            <person name="Wels M."/>
            <person name="Kleerebezem M."/>
            <person name="van Hijum S.A."/>
        </authorList>
    </citation>
    <scope>NUCLEOTIDE SEQUENCE [LARGE SCALE GENOMIC DNA]</scope>
    <scope>GENOME REANNOTATION</scope>
    <source>
        <strain>ATCC BAA-793 / NCIMB 8826 / WCFS1</strain>
    </source>
</reference>
<evidence type="ECO:0000255" key="1">
    <source>
        <dbReference type="HAMAP-Rule" id="MF_00123"/>
    </source>
</evidence>
<sequence length="562" mass="62910">MDYKQLVAAALAPALPDLTQEAILDKIEQPKTSKQGDLAFPTFTLAKTLHKAPQMIASDIVEKVDSSDFEKVVAMGPYVNFFFKKDAFAADILNQVLSNGGHFGDAKLGEAGQVPIDMSSPNIAKPISMGHLRSTVIGNSLANILSKLDYQPVKINHLGDWGTQFGKLITAYKMWGSEAEVKADPINNLLKYYVRFHKEDVDHPEMDDEAREWFKKLENGDEEATHLWSWFRSESLKAFKKIYQRLDIDFDSFKGEAFYNDKMQEVVDILEDKHLLQESQGAEVVDLSKYDLNPALIKKSDGATLYITRDLAAAIYRKRTYDFVQSLYVVGNEQTNHFKQLKAVLTEMGFDWADQIHHIPFGLITSGGKKLSTRSGRVILLDKVLDDAVALAHEQIEAKNPDLPNKDEVADAVGIGAVVFHDLKNERMNSFDFNLEEVVRFEGETGPYVQYAHARAESILRKAGSPEIAATEQTLSDPAAWDTLKLLSEFPATVVRASTEYEPSVIAKYAIHLAKAYNKYYANTKILVEDDELNARLALVKSVSIVLKEALRLLGVKAPDEM</sequence>
<protein>
    <recommendedName>
        <fullName evidence="1">Arginine--tRNA ligase</fullName>
        <ecNumber evidence="1">6.1.1.19</ecNumber>
    </recommendedName>
    <alternativeName>
        <fullName evidence="1">Arginyl-tRNA synthetase</fullName>
        <shortName evidence="1">ArgRS</shortName>
    </alternativeName>
</protein>
<dbReference type="EC" id="6.1.1.19" evidence="1"/>
<dbReference type="EMBL" id="AL935263">
    <property type="protein sequence ID" value="CCC78734.1"/>
    <property type="molecule type" value="Genomic_DNA"/>
</dbReference>
<dbReference type="RefSeq" id="WP_011101383.1">
    <property type="nucleotide sequence ID" value="NC_004567.2"/>
</dbReference>
<dbReference type="RefSeq" id="YP_004889248.1">
    <property type="nucleotide sequence ID" value="NC_004567.2"/>
</dbReference>
<dbReference type="SMR" id="Q88X53"/>
<dbReference type="STRING" id="220668.lp_1391"/>
<dbReference type="EnsemblBacteria" id="CCC78734">
    <property type="protein sequence ID" value="CCC78734"/>
    <property type="gene ID" value="lp_1391"/>
</dbReference>
<dbReference type="GeneID" id="77217829"/>
<dbReference type="KEGG" id="lpl:lp_1391"/>
<dbReference type="PATRIC" id="fig|220668.9.peg.1165"/>
<dbReference type="eggNOG" id="COG0018">
    <property type="taxonomic scope" value="Bacteria"/>
</dbReference>
<dbReference type="HOGENOM" id="CLU_006406_6_1_9"/>
<dbReference type="OrthoDB" id="9805987at2"/>
<dbReference type="PhylomeDB" id="Q88X53"/>
<dbReference type="Proteomes" id="UP000000432">
    <property type="component" value="Chromosome"/>
</dbReference>
<dbReference type="GO" id="GO:0005737">
    <property type="term" value="C:cytoplasm"/>
    <property type="evidence" value="ECO:0007669"/>
    <property type="project" value="UniProtKB-SubCell"/>
</dbReference>
<dbReference type="GO" id="GO:0004814">
    <property type="term" value="F:arginine-tRNA ligase activity"/>
    <property type="evidence" value="ECO:0007669"/>
    <property type="project" value="UniProtKB-UniRule"/>
</dbReference>
<dbReference type="GO" id="GO:0005524">
    <property type="term" value="F:ATP binding"/>
    <property type="evidence" value="ECO:0007669"/>
    <property type="project" value="UniProtKB-UniRule"/>
</dbReference>
<dbReference type="GO" id="GO:0006420">
    <property type="term" value="P:arginyl-tRNA aminoacylation"/>
    <property type="evidence" value="ECO:0007669"/>
    <property type="project" value="UniProtKB-UniRule"/>
</dbReference>
<dbReference type="CDD" id="cd07956">
    <property type="entry name" value="Anticodon_Ia_Arg"/>
    <property type="match status" value="1"/>
</dbReference>
<dbReference type="CDD" id="cd00671">
    <property type="entry name" value="ArgRS_core"/>
    <property type="match status" value="1"/>
</dbReference>
<dbReference type="FunFam" id="3.40.50.620:FF:000116">
    <property type="entry name" value="Arginine--tRNA ligase"/>
    <property type="match status" value="1"/>
</dbReference>
<dbReference type="FunFam" id="1.10.730.10:FF:000006">
    <property type="entry name" value="Arginyl-tRNA synthetase 2, mitochondrial"/>
    <property type="match status" value="1"/>
</dbReference>
<dbReference type="Gene3D" id="3.30.1360.70">
    <property type="entry name" value="Arginyl tRNA synthetase N-terminal domain"/>
    <property type="match status" value="1"/>
</dbReference>
<dbReference type="Gene3D" id="3.40.50.620">
    <property type="entry name" value="HUPs"/>
    <property type="match status" value="1"/>
</dbReference>
<dbReference type="Gene3D" id="1.10.730.10">
    <property type="entry name" value="Isoleucyl-tRNA Synthetase, Domain 1"/>
    <property type="match status" value="1"/>
</dbReference>
<dbReference type="HAMAP" id="MF_00123">
    <property type="entry name" value="Arg_tRNA_synth"/>
    <property type="match status" value="1"/>
</dbReference>
<dbReference type="InterPro" id="IPR001278">
    <property type="entry name" value="Arg-tRNA-ligase"/>
</dbReference>
<dbReference type="InterPro" id="IPR005148">
    <property type="entry name" value="Arg-tRNA-synth_N"/>
</dbReference>
<dbReference type="InterPro" id="IPR036695">
    <property type="entry name" value="Arg-tRNA-synth_N_sf"/>
</dbReference>
<dbReference type="InterPro" id="IPR035684">
    <property type="entry name" value="ArgRS_core"/>
</dbReference>
<dbReference type="InterPro" id="IPR008909">
    <property type="entry name" value="DALR_anticod-bd"/>
</dbReference>
<dbReference type="InterPro" id="IPR014729">
    <property type="entry name" value="Rossmann-like_a/b/a_fold"/>
</dbReference>
<dbReference type="InterPro" id="IPR009080">
    <property type="entry name" value="tRNAsynth_Ia_anticodon-bd"/>
</dbReference>
<dbReference type="NCBIfam" id="TIGR00456">
    <property type="entry name" value="argS"/>
    <property type="match status" value="1"/>
</dbReference>
<dbReference type="PANTHER" id="PTHR11956:SF5">
    <property type="entry name" value="ARGININE--TRNA LIGASE, CYTOPLASMIC"/>
    <property type="match status" value="1"/>
</dbReference>
<dbReference type="PANTHER" id="PTHR11956">
    <property type="entry name" value="ARGINYL-TRNA SYNTHETASE"/>
    <property type="match status" value="1"/>
</dbReference>
<dbReference type="Pfam" id="PF03485">
    <property type="entry name" value="Arg_tRNA_synt_N"/>
    <property type="match status" value="1"/>
</dbReference>
<dbReference type="Pfam" id="PF05746">
    <property type="entry name" value="DALR_1"/>
    <property type="match status" value="1"/>
</dbReference>
<dbReference type="Pfam" id="PF00750">
    <property type="entry name" value="tRNA-synt_1d"/>
    <property type="match status" value="1"/>
</dbReference>
<dbReference type="PRINTS" id="PR01038">
    <property type="entry name" value="TRNASYNTHARG"/>
</dbReference>
<dbReference type="SMART" id="SM01016">
    <property type="entry name" value="Arg_tRNA_synt_N"/>
    <property type="match status" value="1"/>
</dbReference>
<dbReference type="SMART" id="SM00836">
    <property type="entry name" value="DALR_1"/>
    <property type="match status" value="1"/>
</dbReference>
<dbReference type="SUPFAM" id="SSF47323">
    <property type="entry name" value="Anticodon-binding domain of a subclass of class I aminoacyl-tRNA synthetases"/>
    <property type="match status" value="1"/>
</dbReference>
<dbReference type="SUPFAM" id="SSF55190">
    <property type="entry name" value="Arginyl-tRNA synthetase (ArgRS), N-terminal 'additional' domain"/>
    <property type="match status" value="1"/>
</dbReference>
<dbReference type="SUPFAM" id="SSF52374">
    <property type="entry name" value="Nucleotidylyl transferase"/>
    <property type="match status" value="1"/>
</dbReference>
<proteinExistence type="inferred from homology"/>
<organism>
    <name type="scientific">Lactiplantibacillus plantarum (strain ATCC BAA-793 / NCIMB 8826 / WCFS1)</name>
    <name type="common">Lactobacillus plantarum</name>
    <dbReference type="NCBI Taxonomy" id="220668"/>
    <lineage>
        <taxon>Bacteria</taxon>
        <taxon>Bacillati</taxon>
        <taxon>Bacillota</taxon>
        <taxon>Bacilli</taxon>
        <taxon>Lactobacillales</taxon>
        <taxon>Lactobacillaceae</taxon>
        <taxon>Lactiplantibacillus</taxon>
    </lineage>
</organism>